<keyword id="KW-0067">ATP-binding</keyword>
<keyword id="KW-0997">Cell inner membrane</keyword>
<keyword id="KW-1003">Cell membrane</keyword>
<keyword id="KW-0418">Kinase</keyword>
<keyword id="KW-0472">Membrane</keyword>
<keyword id="KW-0547">Nucleotide-binding</keyword>
<keyword id="KW-0597">Phosphoprotein</keyword>
<keyword id="KW-1185">Reference proteome</keyword>
<keyword id="KW-0808">Transferase</keyword>
<keyword id="KW-0812">Transmembrane</keyword>
<keyword id="KW-1133">Transmembrane helix</keyword>
<keyword id="KW-0902">Two-component regulatory system</keyword>
<feature type="chain" id="PRO_0000074695" description="Signal transduction histidine-protein kinase AtoS">
    <location>
        <begin position="1"/>
        <end position="608"/>
    </location>
</feature>
<feature type="topological domain" description="Cytoplasmic" evidence="12">
    <location>
        <begin position="1"/>
        <end position="15"/>
    </location>
</feature>
<feature type="transmembrane region" description="Helical" evidence="1">
    <location>
        <begin position="16"/>
        <end position="36"/>
    </location>
</feature>
<feature type="topological domain" description="Periplasmic" evidence="12">
    <location>
        <begin position="37"/>
        <end position="189"/>
    </location>
</feature>
<feature type="transmembrane region" description="Helical" evidence="1">
    <location>
        <begin position="190"/>
        <end position="210"/>
    </location>
</feature>
<feature type="topological domain" description="Cytoplasmic" evidence="12">
    <location>
        <begin position="211"/>
        <end position="608"/>
    </location>
</feature>
<feature type="domain" description="HAMP" evidence="2">
    <location>
        <begin position="212"/>
        <end position="262"/>
    </location>
</feature>
<feature type="domain" description="PAS" evidence="4">
    <location>
        <begin position="260"/>
        <end position="305"/>
    </location>
</feature>
<feature type="domain" description="PAC" evidence="5">
    <location>
        <begin position="326"/>
        <end position="382"/>
    </location>
</feature>
<feature type="domain" description="Histidine kinase" evidence="3">
    <location>
        <begin position="395"/>
        <end position="602"/>
    </location>
</feature>
<feature type="modified residue" description="Phosphohistidine; by autocatalysis" evidence="3 10">
    <location>
        <position position="398"/>
    </location>
</feature>
<feature type="mutagenesis site" description="Lack of phosphorylation. Cannot respond to acetoacetate induction." evidence="10">
    <original>H</original>
    <variation>L</variation>
    <location>
        <position position="398"/>
    </location>
</feature>
<feature type="mutagenesis site" description="Cannot bind ATP and is unable to autophosphorylate." evidence="10">
    <original>G</original>
    <variation>A</variation>
    <location>
        <position position="565"/>
    </location>
</feature>
<sequence length="608" mass="67790">MHYMKWIYPRRLRNQMILMAILMVIVPTLTIGYIVETEGRSAVLSEKEKKLSAVVNLLNQALGDRYDLYIDLPREERIRALNAELAPITENITHAFPGIGAGYYNKMLDAIITYAPSALYQNNVGVTIAADHPGREVMRTNTPLVYSGRQVRGDILNSMLPIERNGEILGYIWANELTEDIRRQAWKMDVRIIIVLTAGLLISLLLIVLFSRRLSANIDIITDGLSTLAQNIPTRLPQLPGEMGQISQSVNNLAQALRETRTLNDLIIENAADGVIAIDRQGDVTTMNPAAEVITGYQRHELVGQPYSMLFDNTQFYSPVLDTLEHGTEHVALEISFPGRDRTIELSVTTSRIHNTHGEMIGALVIFSDLTARKETQRRMAQAERLATLGELMAGVAHEVRNPLTAIRGYVQILRQQTSDPIHQEYLSVVLKEIDSINKVIQQLLEFSRPRHSQWQQVSLNALVEETLVLVQTAGVQARVDFISELDNELSPINADRELLKQVLLNILINAVQAISARGKIRIQTWQYSDSQQAISIEDNGCGIDLSLQKKIFDPFFTTKASGTGLGLALSQRIINAHQGDIRVASLPGYGATFTLILPINPQGNQTV</sequence>
<reference key="1">
    <citation type="journal article" date="1993" name="Proc. Natl. Acad. Sci. U.S.A.">
        <title>Identification, cloning, and nucleotide sequencing of the ornithine decarboxylase antizyme gene of Escherichia coli.</title>
        <authorList>
            <person name="Canellakis E.S."/>
            <person name="Paterakis A.A."/>
            <person name="Huang S.-C."/>
            <person name="Panagiotidis C.A."/>
            <person name="Kyriakidis D.A."/>
        </authorList>
    </citation>
    <scope>NUCLEOTIDE SEQUENCE [GENOMIC DNA]</scope>
    <source>
        <strain>K12</strain>
    </source>
</reference>
<reference key="2">
    <citation type="journal article" date="1996" name="DNA Res.">
        <title>A 460-kb DNA sequence of the Escherichia coli K-12 genome corresponding to the 40.1-50.0 min region on the linkage map.</title>
        <authorList>
            <person name="Itoh T."/>
            <person name="Aiba H."/>
            <person name="Baba T."/>
            <person name="Fujita K."/>
            <person name="Hayashi K."/>
            <person name="Inada T."/>
            <person name="Isono K."/>
            <person name="Kasai H."/>
            <person name="Kimura S."/>
            <person name="Kitakawa M."/>
            <person name="Kitagawa M."/>
            <person name="Makino K."/>
            <person name="Miki T."/>
            <person name="Mizobuchi K."/>
            <person name="Mori H."/>
            <person name="Mori T."/>
            <person name="Motomura K."/>
            <person name="Nakade S."/>
            <person name="Nakamura Y."/>
            <person name="Nashimoto H."/>
            <person name="Nishio Y."/>
            <person name="Oshima T."/>
            <person name="Saito N."/>
            <person name="Sampei G."/>
            <person name="Seki Y."/>
            <person name="Sivasundaram S."/>
            <person name="Tagami H."/>
            <person name="Takeda J."/>
            <person name="Takemoto K."/>
            <person name="Wada C."/>
            <person name="Yamamoto Y."/>
            <person name="Horiuchi T."/>
        </authorList>
    </citation>
    <scope>NUCLEOTIDE SEQUENCE [LARGE SCALE GENOMIC DNA]</scope>
    <source>
        <strain>K12 / W3110 / ATCC 27325 / DSM 5911</strain>
    </source>
</reference>
<reference key="3">
    <citation type="journal article" date="1997" name="Science">
        <title>The complete genome sequence of Escherichia coli K-12.</title>
        <authorList>
            <person name="Blattner F.R."/>
            <person name="Plunkett G. III"/>
            <person name="Bloch C.A."/>
            <person name="Perna N.T."/>
            <person name="Burland V."/>
            <person name="Riley M."/>
            <person name="Collado-Vides J."/>
            <person name="Glasner J.D."/>
            <person name="Rode C.K."/>
            <person name="Mayhew G.F."/>
            <person name="Gregor J."/>
            <person name="Davis N.W."/>
            <person name="Kirkpatrick H.A."/>
            <person name="Goeden M.A."/>
            <person name="Rose D.J."/>
            <person name="Mau B."/>
            <person name="Shao Y."/>
        </authorList>
    </citation>
    <scope>NUCLEOTIDE SEQUENCE [LARGE SCALE GENOMIC DNA]</scope>
    <source>
        <strain>K12 / MG1655 / ATCC 47076</strain>
    </source>
</reference>
<reference key="4">
    <citation type="journal article" date="2006" name="Mol. Syst. Biol.">
        <title>Highly accurate genome sequences of Escherichia coli K-12 strains MG1655 and W3110.</title>
        <authorList>
            <person name="Hayashi K."/>
            <person name="Morooka N."/>
            <person name="Yamamoto Y."/>
            <person name="Fujita K."/>
            <person name="Isono K."/>
            <person name="Choi S."/>
            <person name="Ohtsubo E."/>
            <person name="Baba T."/>
            <person name="Wanner B.L."/>
            <person name="Mori H."/>
            <person name="Horiuchi T."/>
        </authorList>
    </citation>
    <scope>NUCLEOTIDE SEQUENCE [LARGE SCALE GENOMIC DNA]</scope>
    <source>
        <strain>K12 / W3110 / ATCC 27325 / DSM 5911</strain>
    </source>
</reference>
<reference key="5">
    <citation type="journal article" date="2005" name="Biochim. Biophys. Acta">
        <title>Phosphorylation activity of the response regulator of the two-component signal transduction system AtoS-AtoC in E. coli.</title>
        <authorList>
            <person name="Lioliou E.E."/>
            <person name="Mimitou E.P."/>
            <person name="Grigoroudis A.I."/>
            <person name="Panagiotidis C.H."/>
            <person name="Panagiotidis C.A."/>
            <person name="Kyriakidis D.A."/>
        </authorList>
    </citation>
    <scope>FUNCTION</scope>
    <scope>CATALYTIC ACTIVITY</scope>
    <scope>SUBCELLULAR LOCATION</scope>
    <scope>PHOSPHORYLATION</scope>
</reference>
<reference key="6">
    <citation type="journal article" date="2005" name="Science">
        <title>Global topology analysis of the Escherichia coli inner membrane proteome.</title>
        <authorList>
            <person name="Daley D.O."/>
            <person name="Rapp M."/>
            <person name="Granseth E."/>
            <person name="Melen K."/>
            <person name="Drew D."/>
            <person name="von Heijne G."/>
        </authorList>
    </citation>
    <scope>SUBCELLULAR LOCATION</scope>
    <source>
        <strain>K12 / MG1655 / ATCC 47076</strain>
    </source>
</reference>
<reference key="7">
    <citation type="journal article" date="2006" name="Biochim. Biophys. Acta">
        <title>Involvement of the AtoS-AtoC signal transduction system in poly-(R)-3-hydroxybutyrate biosynthesis in Escherichia coli.</title>
        <authorList>
            <person name="Theodorou M.C."/>
            <person name="Panagiotidis C.A."/>
            <person name="Panagiotidis C.H."/>
            <person name="Pantazaki A.A."/>
            <person name="Kyriakidis D.A."/>
        </authorList>
    </citation>
    <scope>FUNCTION</scope>
    <source>
        <strain>K12</strain>
    </source>
</reference>
<reference key="8">
    <citation type="journal article" date="2007" name="Biochim. Biophys. Acta">
        <title>Spermidine triggering effect to the signal transduction through the AtoS-AtoC/Az two-component system in Escherichia coli.</title>
        <authorList>
            <person name="Theodorou M.C."/>
            <person name="Theodorou E.C."/>
            <person name="Panagiotidis C.A."/>
            <person name="Kyriakidis D.A."/>
        </authorList>
    </citation>
    <scope>FUNCTION</scope>
</reference>
<reference key="9">
    <citation type="journal article" date="2008" name="Biochim. Biophys. Acta">
        <title>Functional characterization of the histidine kinase of the E. coli two-component signal transduction system AtoS-AtoC.</title>
        <authorList>
            <person name="Filippou P.S."/>
            <person name="Kasemian L.D."/>
            <person name="Panagiotidis C.A."/>
            <person name="Kyriakidis D.A."/>
        </authorList>
    </citation>
    <scope>FUNCTION</scope>
    <scope>CATALYTIC ACTIVITY</scope>
    <scope>SUBUNIT</scope>
    <scope>PHOSPHORYLATION AT HIS-398</scope>
    <scope>MUTAGENESIS OF HIS-398 AND GLY-565</scope>
</reference>
<reference key="10">
    <citation type="journal article" date="2012" name="Amino Acids">
        <title>Involvement of AtoSC two-component system in Escherichia coli flagellar regulon.</title>
        <authorList>
            <person name="Theodorou M.C."/>
            <person name="Theodorou E.C."/>
            <person name="Kyriakidis D.A."/>
        </authorList>
    </citation>
    <scope>FUNCTION</scope>
    <scope>DISRUPTION PHENOTYPE</scope>
</reference>
<gene>
    <name type="primary">atoS</name>
    <name type="ordered locus">b2219</name>
    <name type="ordered locus">JW2213</name>
</gene>
<organism>
    <name type="scientific">Escherichia coli (strain K12)</name>
    <dbReference type="NCBI Taxonomy" id="83333"/>
    <lineage>
        <taxon>Bacteria</taxon>
        <taxon>Pseudomonadati</taxon>
        <taxon>Pseudomonadota</taxon>
        <taxon>Gammaproteobacteria</taxon>
        <taxon>Enterobacterales</taxon>
        <taxon>Enterobacteriaceae</taxon>
        <taxon>Escherichia</taxon>
    </lineage>
</organism>
<accession>Q06067</accession>
<proteinExistence type="evidence at protein level"/>
<name>ATOS_ECOLI</name>
<protein>
    <recommendedName>
        <fullName evidence="12">Signal transduction histidine-protein kinase AtoS</fullName>
        <ecNumber evidence="7 10">2.7.13.3</ecNumber>
    </recommendedName>
</protein>
<evidence type="ECO:0000255" key="1"/>
<evidence type="ECO:0000255" key="2">
    <source>
        <dbReference type="PROSITE-ProRule" id="PRU00102"/>
    </source>
</evidence>
<evidence type="ECO:0000255" key="3">
    <source>
        <dbReference type="PROSITE-ProRule" id="PRU00107"/>
    </source>
</evidence>
<evidence type="ECO:0000255" key="4">
    <source>
        <dbReference type="PROSITE-ProRule" id="PRU00140"/>
    </source>
</evidence>
<evidence type="ECO:0000255" key="5">
    <source>
        <dbReference type="PROSITE-ProRule" id="PRU00141"/>
    </source>
</evidence>
<evidence type="ECO:0000269" key="6">
    <source>
    </source>
</evidence>
<evidence type="ECO:0000269" key="7">
    <source>
    </source>
</evidence>
<evidence type="ECO:0000269" key="8">
    <source>
    </source>
</evidence>
<evidence type="ECO:0000269" key="9">
    <source>
    </source>
</evidence>
<evidence type="ECO:0000269" key="10">
    <source>
    </source>
</evidence>
<evidence type="ECO:0000269" key="11">
    <source>
    </source>
</evidence>
<evidence type="ECO:0000305" key="12"/>
<comment type="function">
    <text evidence="7 8 9 10 11">Member of the two-component regulatory system AtoS/AtoC. In the presence of acetoacetate, AtoS/AtoC stimulates the expression of the atoDAEB operon, leading to short chain fatty acid catabolism and activation of the poly-(R)-3-hydroxybutyrate (cPHB) biosynthetic pathway. Also induces the operon in response to spermidine (PubMed:16153782, PubMed:16564134, PubMed:17475408). Involved in the regulation of motility and chemotaxis, via transcriptional induction of the flagellar regulon (PubMed:22083893). AtoS is a membrane-associated kinase that phosphorylates and activates AtoC in response to environmental signals (PubMed:16153782, PubMed:18534200).</text>
</comment>
<comment type="catalytic activity">
    <reaction evidence="7 10">
        <text>ATP + protein L-histidine = ADP + protein N-phospho-L-histidine.</text>
        <dbReference type="EC" id="2.7.13.3"/>
    </reaction>
</comment>
<comment type="subunit">
    <text evidence="10">Homodimer.</text>
</comment>
<comment type="subcellular location">
    <subcellularLocation>
        <location evidence="6 7">Cell inner membrane</location>
        <topology evidence="1">Multi-pass membrane protein</topology>
    </subcellularLocation>
</comment>
<comment type="PTM">
    <text evidence="7 10">Autophosphorylated (PubMed:16153782, PubMed:18534200). Each AtoS molecule may phosphorylate its partner within the dimer rather than phosphorylating itself (PubMed:18534200).</text>
</comment>
<comment type="disruption phenotype">
    <text evidence="11">Deletion of the atoSC locus renders cells not motile or responsive against any chemoattractant or repellent independently of the atoSC inducer's presence.</text>
</comment>
<dbReference type="EC" id="2.7.13.3" evidence="7 10"/>
<dbReference type="EMBL" id="L13078">
    <property type="protein sequence ID" value="AAA23449.1"/>
    <property type="molecule type" value="Genomic_DNA"/>
</dbReference>
<dbReference type="EMBL" id="U00096">
    <property type="protein sequence ID" value="AAC75279.1"/>
    <property type="molecule type" value="Genomic_DNA"/>
</dbReference>
<dbReference type="EMBL" id="AP009048">
    <property type="protein sequence ID" value="BAA16015.1"/>
    <property type="molecule type" value="Genomic_DNA"/>
</dbReference>
<dbReference type="PIR" id="A64992">
    <property type="entry name" value="A64992"/>
</dbReference>
<dbReference type="RefSeq" id="NP_416723.1">
    <property type="nucleotide sequence ID" value="NC_000913.3"/>
</dbReference>
<dbReference type="RefSeq" id="WP_000559125.1">
    <property type="nucleotide sequence ID" value="NZ_STEB01000002.1"/>
</dbReference>
<dbReference type="SMR" id="Q06067"/>
<dbReference type="BioGRID" id="4262011">
    <property type="interactions" value="21"/>
</dbReference>
<dbReference type="FunCoup" id="Q06067">
    <property type="interactions" value="494"/>
</dbReference>
<dbReference type="IntAct" id="Q06067">
    <property type="interactions" value="2"/>
</dbReference>
<dbReference type="STRING" id="511145.b2219"/>
<dbReference type="iPTMnet" id="Q06067"/>
<dbReference type="PaxDb" id="511145-b2219"/>
<dbReference type="EnsemblBacteria" id="AAC75279">
    <property type="protein sequence ID" value="AAC75279"/>
    <property type="gene ID" value="b2219"/>
</dbReference>
<dbReference type="GeneID" id="949011"/>
<dbReference type="KEGG" id="ecj:JW2213"/>
<dbReference type="KEGG" id="eco:b2219"/>
<dbReference type="KEGG" id="ecoc:C3026_12405"/>
<dbReference type="PATRIC" id="fig|1411691.4.peg.16"/>
<dbReference type="EchoBASE" id="EB1618"/>
<dbReference type="eggNOG" id="COG3852">
    <property type="taxonomic scope" value="Bacteria"/>
</dbReference>
<dbReference type="HOGENOM" id="CLU_000445_89_29_6"/>
<dbReference type="InParanoid" id="Q06067"/>
<dbReference type="OMA" id="LTFWAVN"/>
<dbReference type="OrthoDB" id="1931120at2"/>
<dbReference type="PhylomeDB" id="Q06067"/>
<dbReference type="BioCyc" id="EcoCyc:ATOS-MONOMER"/>
<dbReference type="BioCyc" id="MetaCyc:ATOS-MONOMER"/>
<dbReference type="BRENDA" id="2.7.13.3">
    <property type="organism ID" value="2026"/>
</dbReference>
<dbReference type="PRO" id="PR:Q06067"/>
<dbReference type="Proteomes" id="UP000000625">
    <property type="component" value="Chromosome"/>
</dbReference>
<dbReference type="GO" id="GO:0005886">
    <property type="term" value="C:plasma membrane"/>
    <property type="evidence" value="ECO:0000314"/>
    <property type="project" value="EcoCyc"/>
</dbReference>
<dbReference type="GO" id="GO:0005524">
    <property type="term" value="F:ATP binding"/>
    <property type="evidence" value="ECO:0000315"/>
    <property type="project" value="EcoCyc"/>
</dbReference>
<dbReference type="GO" id="GO:0000155">
    <property type="term" value="F:phosphorelay sensor kinase activity"/>
    <property type="evidence" value="ECO:0000314"/>
    <property type="project" value="EcoCyc"/>
</dbReference>
<dbReference type="GO" id="GO:0042803">
    <property type="term" value="F:protein homodimerization activity"/>
    <property type="evidence" value="ECO:0000314"/>
    <property type="project" value="EcoCyc"/>
</dbReference>
<dbReference type="GO" id="GO:0006355">
    <property type="term" value="P:regulation of DNA-templated transcription"/>
    <property type="evidence" value="ECO:0007669"/>
    <property type="project" value="InterPro"/>
</dbReference>
<dbReference type="GO" id="GO:1904583">
    <property type="term" value="P:response to polyamine macromolecule"/>
    <property type="evidence" value="ECO:0000314"/>
    <property type="project" value="EcoCyc"/>
</dbReference>
<dbReference type="GO" id="GO:0007165">
    <property type="term" value="P:signal transduction"/>
    <property type="evidence" value="ECO:0000314"/>
    <property type="project" value="EcoCyc"/>
</dbReference>
<dbReference type="CDD" id="cd00082">
    <property type="entry name" value="HisKA"/>
    <property type="match status" value="1"/>
</dbReference>
<dbReference type="CDD" id="cd00130">
    <property type="entry name" value="PAS"/>
    <property type="match status" value="1"/>
</dbReference>
<dbReference type="Gene3D" id="1.10.287.130">
    <property type="match status" value="1"/>
</dbReference>
<dbReference type="Gene3D" id="6.10.340.10">
    <property type="match status" value="1"/>
</dbReference>
<dbReference type="Gene3D" id="3.30.565.10">
    <property type="entry name" value="Histidine kinase-like ATPase, C-terminal domain"/>
    <property type="match status" value="1"/>
</dbReference>
<dbReference type="Gene3D" id="3.30.450.20">
    <property type="entry name" value="PAS domain"/>
    <property type="match status" value="1"/>
</dbReference>
<dbReference type="InterPro" id="IPR003660">
    <property type="entry name" value="HAMP_dom"/>
</dbReference>
<dbReference type="InterPro" id="IPR036890">
    <property type="entry name" value="HATPase_C_sf"/>
</dbReference>
<dbReference type="InterPro" id="IPR005467">
    <property type="entry name" value="His_kinase_dom"/>
</dbReference>
<dbReference type="InterPro" id="IPR003661">
    <property type="entry name" value="HisK_dim/P_dom"/>
</dbReference>
<dbReference type="InterPro" id="IPR036097">
    <property type="entry name" value="HisK_dim/P_sf"/>
</dbReference>
<dbReference type="InterPro" id="IPR000014">
    <property type="entry name" value="PAS"/>
</dbReference>
<dbReference type="InterPro" id="IPR000700">
    <property type="entry name" value="PAS-assoc_C"/>
</dbReference>
<dbReference type="InterPro" id="IPR035965">
    <property type="entry name" value="PAS-like_dom_sf"/>
</dbReference>
<dbReference type="InterPro" id="IPR013767">
    <property type="entry name" value="PAS_fold"/>
</dbReference>
<dbReference type="InterPro" id="IPR004358">
    <property type="entry name" value="Sig_transdc_His_kin-like_C"/>
</dbReference>
<dbReference type="NCBIfam" id="NF008468">
    <property type="entry name" value="PRK11360.1"/>
    <property type="match status" value="1"/>
</dbReference>
<dbReference type="NCBIfam" id="TIGR00229">
    <property type="entry name" value="sensory_box"/>
    <property type="match status" value="1"/>
</dbReference>
<dbReference type="PANTHER" id="PTHR43065:SF10">
    <property type="entry name" value="PEROXIDE STRESS-ACTIVATED HISTIDINE KINASE MAK3"/>
    <property type="match status" value="1"/>
</dbReference>
<dbReference type="PANTHER" id="PTHR43065">
    <property type="entry name" value="SENSOR HISTIDINE KINASE"/>
    <property type="match status" value="1"/>
</dbReference>
<dbReference type="Pfam" id="PF02518">
    <property type="entry name" value="HATPase_c"/>
    <property type="match status" value="1"/>
</dbReference>
<dbReference type="Pfam" id="PF00512">
    <property type="entry name" value="HisKA"/>
    <property type="match status" value="1"/>
</dbReference>
<dbReference type="Pfam" id="PF00989">
    <property type="entry name" value="PAS"/>
    <property type="match status" value="1"/>
</dbReference>
<dbReference type="PRINTS" id="PR00344">
    <property type="entry name" value="BCTRLSENSOR"/>
</dbReference>
<dbReference type="SMART" id="SM00304">
    <property type="entry name" value="HAMP"/>
    <property type="match status" value="1"/>
</dbReference>
<dbReference type="SMART" id="SM00387">
    <property type="entry name" value="HATPase_c"/>
    <property type="match status" value="1"/>
</dbReference>
<dbReference type="SMART" id="SM00388">
    <property type="entry name" value="HisKA"/>
    <property type="match status" value="1"/>
</dbReference>
<dbReference type="SMART" id="SM00091">
    <property type="entry name" value="PAS"/>
    <property type="match status" value="1"/>
</dbReference>
<dbReference type="SUPFAM" id="SSF55874">
    <property type="entry name" value="ATPase domain of HSP90 chaperone/DNA topoisomerase II/histidine kinase"/>
    <property type="match status" value="1"/>
</dbReference>
<dbReference type="SUPFAM" id="SSF47384">
    <property type="entry name" value="Homodimeric domain of signal transducing histidine kinase"/>
    <property type="match status" value="1"/>
</dbReference>
<dbReference type="SUPFAM" id="SSF55785">
    <property type="entry name" value="PYP-like sensor domain (PAS domain)"/>
    <property type="match status" value="1"/>
</dbReference>
<dbReference type="PROSITE" id="PS50885">
    <property type="entry name" value="HAMP"/>
    <property type="match status" value="1"/>
</dbReference>
<dbReference type="PROSITE" id="PS50109">
    <property type="entry name" value="HIS_KIN"/>
    <property type="match status" value="1"/>
</dbReference>
<dbReference type="PROSITE" id="PS50113">
    <property type="entry name" value="PAC"/>
    <property type="match status" value="1"/>
</dbReference>
<dbReference type="PROSITE" id="PS50112">
    <property type="entry name" value="PAS"/>
    <property type="match status" value="1"/>
</dbReference>